<feature type="signal peptide" evidence="1">
    <location>
        <begin position="1"/>
        <end position="25"/>
    </location>
</feature>
<feature type="chain" id="PRO_0000022242" description="Dolichyl-diphosphooligosaccharide--protein glycosyltransferase subunit 1">
    <location>
        <begin position="26"/>
        <end position="608"/>
    </location>
</feature>
<feature type="topological domain" description="Lumenal" evidence="4">
    <location>
        <begin position="26"/>
        <end position="440"/>
    </location>
</feature>
<feature type="transmembrane region" description="Helical" evidence="4">
    <location>
        <begin position="441"/>
        <end position="458"/>
    </location>
</feature>
<feature type="topological domain" description="Cytoplasmic" evidence="4">
    <location>
        <begin position="459"/>
        <end position="608"/>
    </location>
</feature>
<feature type="modified residue" description="N6-acetyllysine" evidence="3">
    <location>
        <position position="188"/>
    </location>
</feature>
<feature type="modified residue" description="N6-acetyllysine; alternate" evidence="8">
    <location>
        <position position="539"/>
    </location>
</feature>
<feature type="glycosylation site" description="N-linked (GlcNAc...) asparagine" evidence="4">
    <location>
        <position position="300"/>
    </location>
</feature>
<feature type="cross-link" description="Glycyl lysine isopeptide (Lys-Gly) (interchain with G-Cter in SUMO2); alternate" evidence="3">
    <location>
        <position position="539"/>
    </location>
</feature>
<comment type="function">
    <text evidence="2">Subunit of the oligosaccharyl transferase (OST) complex that catalyzes the initial transfer of a defined glycan (Glc(3)Man(9)GlcNAc(2) in eukaryotes) from the lipid carrier dolichol-pyrophosphate to an asparagine residue within an Asn-X-Ser/Thr consensus motif in nascent polypeptide chains, the first step in protein N-glycosylation. N-glycosylation occurs cotranslationally and the complex associates with the Sec61 complex at the channel-forming translocon complex that mediates protein translocation across the endoplasmic reticulum (ER). All subunits are required for a maximal enzyme activity.</text>
</comment>
<comment type="pathway">
    <text evidence="3">Protein modification; protein glycosylation.</text>
</comment>
<comment type="subunit">
    <text evidence="2 5">Component of the oligosaccharyltransferase (OST) complex. OST exists in two different complex forms which contain common core subunits RPN1, RPN2, OST48, OST4, DAD1 and TMEM258, either STT3A or STT3B as catalytic subunits, and form-specific accessory subunits. STT3A complex assembly occurs through the formation of 3 subcomplexes. Subcomplex 1 contains RPN1 and TMEM258, subcomplex 2 contains the STT3A-specific subunits STT3A, DC2/OSTC, and KCP2 as well as the core subunit OST4, and subcomplex 3 contains RPN2, DAD1, and OST48. The STT3A complex can form stable complexes with the Sec61 complex or with both the Sec61 and TRAP complexes (By similarity). Interacts with TMEM35A/NACHO (PubMed:32783947).</text>
</comment>
<comment type="subcellular location">
    <subcellularLocation>
        <location evidence="2">Endoplasmic reticulum membrane</location>
        <topology evidence="2">Single-pass type I membrane protein</topology>
    </subcellularLocation>
</comment>
<comment type="PTM">
    <text evidence="3">Ubiquitinated by the ECS(ASB11) complex. Ubiquitinated by RNF128, leading to degradation in a proteasome/lysosome-dependent manner.</text>
</comment>
<comment type="PTM">
    <text evidence="3">Ufmylated by UFL1 in response to endoplasmic reticulum stress, promoting reticulophagy of endoplasmic reticulum sheets.</text>
</comment>
<comment type="similarity">
    <text evidence="6">Belongs to the OST1 family.</text>
</comment>
<organism>
    <name type="scientific">Mus musculus</name>
    <name type="common">Mouse</name>
    <dbReference type="NCBI Taxonomy" id="10090"/>
    <lineage>
        <taxon>Eukaryota</taxon>
        <taxon>Metazoa</taxon>
        <taxon>Chordata</taxon>
        <taxon>Craniata</taxon>
        <taxon>Vertebrata</taxon>
        <taxon>Euteleostomi</taxon>
        <taxon>Mammalia</taxon>
        <taxon>Eutheria</taxon>
        <taxon>Euarchontoglires</taxon>
        <taxon>Glires</taxon>
        <taxon>Rodentia</taxon>
        <taxon>Myomorpha</taxon>
        <taxon>Muroidea</taxon>
        <taxon>Muridae</taxon>
        <taxon>Murinae</taxon>
        <taxon>Mus</taxon>
        <taxon>Mus</taxon>
    </lineage>
</organism>
<evidence type="ECO:0000250" key="1"/>
<evidence type="ECO:0000250" key="2">
    <source>
        <dbReference type="UniProtKB" id="E2RQ08"/>
    </source>
</evidence>
<evidence type="ECO:0000250" key="3">
    <source>
        <dbReference type="UniProtKB" id="P04843"/>
    </source>
</evidence>
<evidence type="ECO:0000255" key="4"/>
<evidence type="ECO:0000269" key="5">
    <source>
    </source>
</evidence>
<evidence type="ECO:0000305" key="6"/>
<evidence type="ECO:0000312" key="7">
    <source>
        <dbReference type="MGI" id="MGI:98084"/>
    </source>
</evidence>
<evidence type="ECO:0007744" key="8">
    <source>
    </source>
</evidence>
<dbReference type="EMBL" id="AK052130">
    <property type="protein sequence ID" value="BAC34853.1"/>
    <property type="molecule type" value="mRNA"/>
</dbReference>
<dbReference type="EMBL" id="AK132750">
    <property type="protein sequence ID" value="BAE21332.1"/>
    <property type="molecule type" value="mRNA"/>
</dbReference>
<dbReference type="EMBL" id="AK151899">
    <property type="protein sequence ID" value="BAE30782.1"/>
    <property type="molecule type" value="mRNA"/>
</dbReference>
<dbReference type="EMBL" id="AK153867">
    <property type="protein sequence ID" value="BAE32221.1"/>
    <property type="molecule type" value="mRNA"/>
</dbReference>
<dbReference type="EMBL" id="BC016080">
    <property type="protein sequence ID" value="AAH16080.1"/>
    <property type="molecule type" value="mRNA"/>
</dbReference>
<dbReference type="CCDS" id="CCDS20332.1"/>
<dbReference type="RefSeq" id="NP_598694.3">
    <property type="nucleotide sequence ID" value="NM_133933.4"/>
</dbReference>
<dbReference type="SMR" id="Q91YQ5"/>
<dbReference type="BioGRID" id="222240">
    <property type="interactions" value="18"/>
</dbReference>
<dbReference type="ComplexPortal" id="CPX-5821">
    <property type="entry name" value="Oligosaccharyltransferase complex A"/>
</dbReference>
<dbReference type="ComplexPortal" id="CPX-5822">
    <property type="entry name" value="Oligosaccharyltransferase complex B, MAGT1 variant"/>
</dbReference>
<dbReference type="ComplexPortal" id="CPX-8739">
    <property type="entry name" value="Oligosaccharyltransferase complex B, TUSC3 variant"/>
</dbReference>
<dbReference type="FunCoup" id="Q91YQ5">
    <property type="interactions" value="3367"/>
</dbReference>
<dbReference type="IntAct" id="Q91YQ5">
    <property type="interactions" value="7"/>
</dbReference>
<dbReference type="MINT" id="Q91YQ5"/>
<dbReference type="STRING" id="10090.ENSMUSP00000032143"/>
<dbReference type="GlyConnect" id="2262">
    <property type="glycosylation" value="5 N-Linked glycans (1 site)"/>
</dbReference>
<dbReference type="GlyCosmos" id="Q91YQ5">
    <property type="glycosylation" value="1 site, 5 glycans"/>
</dbReference>
<dbReference type="GlyGen" id="Q91YQ5">
    <property type="glycosylation" value="4 sites, 7 N-linked glycans (2 sites), 1 O-linked glycan (1 site)"/>
</dbReference>
<dbReference type="iPTMnet" id="Q91YQ5"/>
<dbReference type="PhosphoSitePlus" id="Q91YQ5"/>
<dbReference type="SwissPalm" id="Q91YQ5"/>
<dbReference type="jPOST" id="Q91YQ5"/>
<dbReference type="PaxDb" id="10090-ENSMUSP00000032143"/>
<dbReference type="PeptideAtlas" id="Q91YQ5"/>
<dbReference type="ProteomicsDB" id="300484"/>
<dbReference type="Pumba" id="Q91YQ5"/>
<dbReference type="Antibodypedia" id="4058">
    <property type="antibodies" value="579 antibodies from 31 providers"/>
</dbReference>
<dbReference type="DNASU" id="103963"/>
<dbReference type="Ensembl" id="ENSMUST00000032143.8">
    <property type="protein sequence ID" value="ENSMUSP00000032143.7"/>
    <property type="gene ID" value="ENSMUSG00000030062.8"/>
</dbReference>
<dbReference type="GeneID" id="103963"/>
<dbReference type="KEGG" id="mmu:103963"/>
<dbReference type="UCSC" id="uc009cva.2">
    <property type="organism name" value="mouse"/>
</dbReference>
<dbReference type="AGR" id="MGI:98084"/>
<dbReference type="CTD" id="6184"/>
<dbReference type="MGI" id="MGI:98084">
    <property type="gene designation" value="Rpn1"/>
</dbReference>
<dbReference type="VEuPathDB" id="HostDB:ENSMUSG00000030062"/>
<dbReference type="eggNOG" id="KOG2291">
    <property type="taxonomic scope" value="Eukaryota"/>
</dbReference>
<dbReference type="GeneTree" id="ENSGT00390000009630"/>
<dbReference type="HOGENOM" id="CLU_031381_2_0_1"/>
<dbReference type="InParanoid" id="Q91YQ5"/>
<dbReference type="OMA" id="RYEYARE"/>
<dbReference type="OrthoDB" id="310030at2759"/>
<dbReference type="PhylomeDB" id="Q91YQ5"/>
<dbReference type="TreeFam" id="TF312988"/>
<dbReference type="UniPathway" id="UPA00378"/>
<dbReference type="BioGRID-ORCS" id="103963">
    <property type="hits" value="20 hits in 77 CRISPR screens"/>
</dbReference>
<dbReference type="CD-CODE" id="CE726F99">
    <property type="entry name" value="Postsynaptic density"/>
</dbReference>
<dbReference type="ChiTaRS" id="Rpn1">
    <property type="organism name" value="mouse"/>
</dbReference>
<dbReference type="PRO" id="PR:Q91YQ5"/>
<dbReference type="Proteomes" id="UP000000589">
    <property type="component" value="Chromosome 6"/>
</dbReference>
<dbReference type="RNAct" id="Q91YQ5">
    <property type="molecule type" value="protein"/>
</dbReference>
<dbReference type="Bgee" id="ENSMUSG00000030062">
    <property type="expression patterns" value="Expressed in metanephric proximal tubule and 264 other cell types or tissues"/>
</dbReference>
<dbReference type="ExpressionAtlas" id="Q91YQ5">
    <property type="expression patterns" value="baseline and differential"/>
</dbReference>
<dbReference type="GO" id="GO:0005829">
    <property type="term" value="C:cytosol"/>
    <property type="evidence" value="ECO:0007669"/>
    <property type="project" value="Ensembl"/>
</dbReference>
<dbReference type="GO" id="GO:0005789">
    <property type="term" value="C:endoplasmic reticulum membrane"/>
    <property type="evidence" value="ECO:0000314"/>
    <property type="project" value="MGI"/>
</dbReference>
<dbReference type="GO" id="GO:0008250">
    <property type="term" value="C:oligosaccharyltransferase complex"/>
    <property type="evidence" value="ECO:0000314"/>
    <property type="project" value="MGI"/>
</dbReference>
<dbReference type="GO" id="GO:0160226">
    <property type="term" value="C:oligosaccharyltransferase complex A"/>
    <property type="evidence" value="ECO:0007669"/>
    <property type="project" value="Ensembl"/>
</dbReference>
<dbReference type="GO" id="GO:0160227">
    <property type="term" value="C:oligosaccharyltransferase complex B"/>
    <property type="evidence" value="ECO:0007669"/>
    <property type="project" value="Ensembl"/>
</dbReference>
<dbReference type="GO" id="GO:0005791">
    <property type="term" value="C:rough endoplasmic reticulum"/>
    <property type="evidence" value="ECO:0000314"/>
    <property type="project" value="MGI"/>
</dbReference>
<dbReference type="GO" id="GO:0006487">
    <property type="term" value="P:protein N-linked glycosylation"/>
    <property type="evidence" value="ECO:0000303"/>
    <property type="project" value="ComplexPortal"/>
</dbReference>
<dbReference type="GO" id="GO:0018279">
    <property type="term" value="P:protein N-linked glycosylation via asparagine"/>
    <property type="evidence" value="ECO:0007669"/>
    <property type="project" value="Ensembl"/>
</dbReference>
<dbReference type="InterPro" id="IPR007676">
    <property type="entry name" value="Ribophorin_I"/>
</dbReference>
<dbReference type="PANTHER" id="PTHR21049:SF0">
    <property type="entry name" value="DOLICHYL-DIPHOSPHOOLIGOSACCHARIDE--PROTEIN GLYCOSYLTRANSFERASE SUBUNIT 1"/>
    <property type="match status" value="1"/>
</dbReference>
<dbReference type="PANTHER" id="PTHR21049">
    <property type="entry name" value="RIBOPHORIN I"/>
    <property type="match status" value="1"/>
</dbReference>
<dbReference type="Pfam" id="PF04597">
    <property type="entry name" value="Ribophorin_I"/>
    <property type="match status" value="1"/>
</dbReference>
<keyword id="KW-0007">Acetylation</keyword>
<keyword id="KW-0256">Endoplasmic reticulum</keyword>
<keyword id="KW-0325">Glycoprotein</keyword>
<keyword id="KW-1017">Isopeptide bond</keyword>
<keyword id="KW-0472">Membrane</keyword>
<keyword id="KW-1185">Reference proteome</keyword>
<keyword id="KW-0732">Signal</keyword>
<keyword id="KW-0812">Transmembrane</keyword>
<keyword id="KW-1133">Transmembrane helix</keyword>
<keyword id="KW-0832">Ubl conjugation</keyword>
<name>RPN1_MOUSE</name>
<protein>
    <recommendedName>
        <fullName evidence="6">Dolichyl-diphosphooligosaccharide--protein glycosyltransferase subunit 1</fullName>
    </recommendedName>
    <alternativeName>
        <fullName>Dolichyl-diphosphooligosaccharide--protein glycosyltransferase 67 kDa subunit</fullName>
    </alternativeName>
    <alternativeName>
        <fullName>Ribophorin I</fullName>
        <shortName>RPN-I</shortName>
    </alternativeName>
    <alternativeName>
        <fullName>Ribophorin-1</fullName>
    </alternativeName>
</protein>
<sequence>MESPVALLLLLLLCLGALAPTPGSASSEAPPLVNEDVKRTVDLSSHLAKVTAEVVLVHPGGGSTSRASSFVLALEPELESRLAHLGVQIKGEDEEDNNLEVRETKIKGKSGRFFTVKLPVALDPGSKISVVVETVYTHVLHPYPTQITQSEKQFVVFEGNHYFYSPYPTKTQTMRVKLASRNVESYTKLGNPSRSEDVLDYGPFKDIPAYSQDTFKVHYENNSPFLTITSMTRVIEVSHWGNIAVEENVDLKHTGAVLKGPFSRYDYQRQPDSGISSIRSFKTILPAAAQDVYYRDEIGNVSTSHLLILDDSVEMEIRPRFPLFGGWKTHYIVGYNLPSYEYLYNLGDQYALKMRFVDHVFDEQVIDSLTVKIILPEGAKNIQVDSPYDISRAPDELHYTYLDTFGRPVIVAYKKNLVEQHIQDIVVHYTFNKVLMLQEPLLVVAAFYILFFTVIIYVRLDFSITKDPAAEARMKVACITEQVLTLVNKRLGLYRHFDETVNRYKQSRDISTLNSGKKSLETEHKAVTSEIAVLQSRLKTEGSDLCDRVSEMQKLDAQVKELVLKSAVEAERLVAGKLKKDTYLENEKLSSGKRQELVTKIDHILDAL</sequence>
<accession>Q91YQ5</accession>
<accession>Q3U985</accession>
<proteinExistence type="evidence at protein level"/>
<reference key="1">
    <citation type="journal article" date="2005" name="Science">
        <title>The transcriptional landscape of the mammalian genome.</title>
        <authorList>
            <person name="Carninci P."/>
            <person name="Kasukawa T."/>
            <person name="Katayama S."/>
            <person name="Gough J."/>
            <person name="Frith M.C."/>
            <person name="Maeda N."/>
            <person name="Oyama R."/>
            <person name="Ravasi T."/>
            <person name="Lenhard B."/>
            <person name="Wells C."/>
            <person name="Kodzius R."/>
            <person name="Shimokawa K."/>
            <person name="Bajic V.B."/>
            <person name="Brenner S.E."/>
            <person name="Batalov S."/>
            <person name="Forrest A.R."/>
            <person name="Zavolan M."/>
            <person name="Davis M.J."/>
            <person name="Wilming L.G."/>
            <person name="Aidinis V."/>
            <person name="Allen J.E."/>
            <person name="Ambesi-Impiombato A."/>
            <person name="Apweiler R."/>
            <person name="Aturaliya R.N."/>
            <person name="Bailey T.L."/>
            <person name="Bansal M."/>
            <person name="Baxter L."/>
            <person name="Beisel K.W."/>
            <person name="Bersano T."/>
            <person name="Bono H."/>
            <person name="Chalk A.M."/>
            <person name="Chiu K.P."/>
            <person name="Choudhary V."/>
            <person name="Christoffels A."/>
            <person name="Clutterbuck D.R."/>
            <person name="Crowe M.L."/>
            <person name="Dalla E."/>
            <person name="Dalrymple B.P."/>
            <person name="de Bono B."/>
            <person name="Della Gatta G."/>
            <person name="di Bernardo D."/>
            <person name="Down T."/>
            <person name="Engstrom P."/>
            <person name="Fagiolini M."/>
            <person name="Faulkner G."/>
            <person name="Fletcher C.F."/>
            <person name="Fukushima T."/>
            <person name="Furuno M."/>
            <person name="Futaki S."/>
            <person name="Gariboldi M."/>
            <person name="Georgii-Hemming P."/>
            <person name="Gingeras T.R."/>
            <person name="Gojobori T."/>
            <person name="Green R.E."/>
            <person name="Gustincich S."/>
            <person name="Harbers M."/>
            <person name="Hayashi Y."/>
            <person name="Hensch T.K."/>
            <person name="Hirokawa N."/>
            <person name="Hill D."/>
            <person name="Huminiecki L."/>
            <person name="Iacono M."/>
            <person name="Ikeo K."/>
            <person name="Iwama A."/>
            <person name="Ishikawa T."/>
            <person name="Jakt M."/>
            <person name="Kanapin A."/>
            <person name="Katoh M."/>
            <person name="Kawasawa Y."/>
            <person name="Kelso J."/>
            <person name="Kitamura H."/>
            <person name="Kitano H."/>
            <person name="Kollias G."/>
            <person name="Krishnan S.P."/>
            <person name="Kruger A."/>
            <person name="Kummerfeld S.K."/>
            <person name="Kurochkin I.V."/>
            <person name="Lareau L.F."/>
            <person name="Lazarevic D."/>
            <person name="Lipovich L."/>
            <person name="Liu J."/>
            <person name="Liuni S."/>
            <person name="McWilliam S."/>
            <person name="Madan Babu M."/>
            <person name="Madera M."/>
            <person name="Marchionni L."/>
            <person name="Matsuda H."/>
            <person name="Matsuzawa S."/>
            <person name="Miki H."/>
            <person name="Mignone F."/>
            <person name="Miyake S."/>
            <person name="Morris K."/>
            <person name="Mottagui-Tabar S."/>
            <person name="Mulder N."/>
            <person name="Nakano N."/>
            <person name="Nakauchi H."/>
            <person name="Ng P."/>
            <person name="Nilsson R."/>
            <person name="Nishiguchi S."/>
            <person name="Nishikawa S."/>
            <person name="Nori F."/>
            <person name="Ohara O."/>
            <person name="Okazaki Y."/>
            <person name="Orlando V."/>
            <person name="Pang K.C."/>
            <person name="Pavan W.J."/>
            <person name="Pavesi G."/>
            <person name="Pesole G."/>
            <person name="Petrovsky N."/>
            <person name="Piazza S."/>
            <person name="Reed J."/>
            <person name="Reid J.F."/>
            <person name="Ring B.Z."/>
            <person name="Ringwald M."/>
            <person name="Rost B."/>
            <person name="Ruan Y."/>
            <person name="Salzberg S.L."/>
            <person name="Sandelin A."/>
            <person name="Schneider C."/>
            <person name="Schoenbach C."/>
            <person name="Sekiguchi K."/>
            <person name="Semple C.A."/>
            <person name="Seno S."/>
            <person name="Sessa L."/>
            <person name="Sheng Y."/>
            <person name="Shibata Y."/>
            <person name="Shimada H."/>
            <person name="Shimada K."/>
            <person name="Silva D."/>
            <person name="Sinclair B."/>
            <person name="Sperling S."/>
            <person name="Stupka E."/>
            <person name="Sugiura K."/>
            <person name="Sultana R."/>
            <person name="Takenaka Y."/>
            <person name="Taki K."/>
            <person name="Tammoja K."/>
            <person name="Tan S.L."/>
            <person name="Tang S."/>
            <person name="Taylor M.S."/>
            <person name="Tegner J."/>
            <person name="Teichmann S.A."/>
            <person name="Ueda H.R."/>
            <person name="van Nimwegen E."/>
            <person name="Verardo R."/>
            <person name="Wei C.L."/>
            <person name="Yagi K."/>
            <person name="Yamanishi H."/>
            <person name="Zabarovsky E."/>
            <person name="Zhu S."/>
            <person name="Zimmer A."/>
            <person name="Hide W."/>
            <person name="Bult C."/>
            <person name="Grimmond S.M."/>
            <person name="Teasdale R.D."/>
            <person name="Liu E.T."/>
            <person name="Brusic V."/>
            <person name="Quackenbush J."/>
            <person name="Wahlestedt C."/>
            <person name="Mattick J.S."/>
            <person name="Hume D.A."/>
            <person name="Kai C."/>
            <person name="Sasaki D."/>
            <person name="Tomaru Y."/>
            <person name="Fukuda S."/>
            <person name="Kanamori-Katayama M."/>
            <person name="Suzuki M."/>
            <person name="Aoki J."/>
            <person name="Arakawa T."/>
            <person name="Iida J."/>
            <person name="Imamura K."/>
            <person name="Itoh M."/>
            <person name="Kato T."/>
            <person name="Kawaji H."/>
            <person name="Kawagashira N."/>
            <person name="Kawashima T."/>
            <person name="Kojima M."/>
            <person name="Kondo S."/>
            <person name="Konno H."/>
            <person name="Nakano K."/>
            <person name="Ninomiya N."/>
            <person name="Nishio T."/>
            <person name="Okada M."/>
            <person name="Plessy C."/>
            <person name="Shibata K."/>
            <person name="Shiraki T."/>
            <person name="Suzuki S."/>
            <person name="Tagami M."/>
            <person name="Waki K."/>
            <person name="Watahiki A."/>
            <person name="Okamura-Oho Y."/>
            <person name="Suzuki H."/>
            <person name="Kawai J."/>
            <person name="Hayashizaki Y."/>
        </authorList>
    </citation>
    <scope>NUCLEOTIDE SEQUENCE [LARGE SCALE MRNA]</scope>
    <source>
        <strain>C57BL/6J</strain>
        <strain>NOD</strain>
        <tissue>Bone marrow</tissue>
        <tissue>Eye</tissue>
        <tissue>Testis</tissue>
        <tissue>Thymus</tissue>
    </source>
</reference>
<reference key="2">
    <citation type="journal article" date="2004" name="Genome Res.">
        <title>The status, quality, and expansion of the NIH full-length cDNA project: the Mammalian Gene Collection (MGC).</title>
        <authorList>
            <consortium name="The MGC Project Team"/>
        </authorList>
    </citation>
    <scope>NUCLEOTIDE SEQUENCE [LARGE SCALE MRNA]</scope>
</reference>
<reference key="3">
    <citation type="journal article" date="2010" name="Cell">
        <title>A tissue-specific atlas of mouse protein phosphorylation and expression.</title>
        <authorList>
            <person name="Huttlin E.L."/>
            <person name="Jedrychowski M.P."/>
            <person name="Elias J.E."/>
            <person name="Goswami T."/>
            <person name="Rad R."/>
            <person name="Beausoleil S.A."/>
            <person name="Villen J."/>
            <person name="Haas W."/>
            <person name="Sowa M.E."/>
            <person name="Gygi S.P."/>
        </authorList>
    </citation>
    <scope>IDENTIFICATION BY MASS SPECTROMETRY [LARGE SCALE ANALYSIS]</scope>
    <source>
        <tissue>Brain</tissue>
        <tissue>Brown adipose tissue</tissue>
        <tissue>Heart</tissue>
        <tissue>Kidney</tissue>
        <tissue>Liver</tissue>
        <tissue>Lung</tissue>
        <tissue>Pancreas</tissue>
        <tissue>Spleen</tissue>
        <tissue>Testis</tissue>
    </source>
</reference>
<reference key="4">
    <citation type="journal article" date="2013" name="Mol. Cell">
        <title>SIRT5-mediated lysine desuccinylation impacts diverse metabolic pathways.</title>
        <authorList>
            <person name="Park J."/>
            <person name="Chen Y."/>
            <person name="Tishkoff D.X."/>
            <person name="Peng C."/>
            <person name="Tan M."/>
            <person name="Dai L."/>
            <person name="Xie Z."/>
            <person name="Zhang Y."/>
            <person name="Zwaans B.M."/>
            <person name="Skinner M.E."/>
            <person name="Lombard D.B."/>
            <person name="Zhao Y."/>
        </authorList>
    </citation>
    <scope>ACETYLATION [LARGE SCALE ANALYSIS] AT LYS-539</scope>
    <scope>IDENTIFICATION BY MASS SPECTROMETRY [LARGE SCALE ANALYSIS]</scope>
    <source>
        <tissue>Embryonic fibroblast</tissue>
    </source>
</reference>
<reference key="5">
    <citation type="journal article" date="2020" name="Cell Rep.">
        <title>NACHO Engages N-Glycosylation ER Chaperone Pathways for alpha7 Nicotinic Receptor Assembly.</title>
        <authorList>
            <person name="Kweon H.J."/>
            <person name="Gu S."/>
            <person name="Witham E."/>
            <person name="Dhara M."/>
            <person name="Yu H."/>
            <person name="Mandon E.D."/>
            <person name="Jawhari A."/>
            <person name="Bredt D.S."/>
        </authorList>
    </citation>
    <scope>INTERACTION WITH TMEM35A/NACHO</scope>
</reference>
<gene>
    <name evidence="7" type="primary">Rpn1</name>
</gene>